<organism>
    <name type="scientific">Acinetobacter baumannii (strain SDF)</name>
    <dbReference type="NCBI Taxonomy" id="509170"/>
    <lineage>
        <taxon>Bacteria</taxon>
        <taxon>Pseudomonadati</taxon>
        <taxon>Pseudomonadota</taxon>
        <taxon>Gammaproteobacteria</taxon>
        <taxon>Moraxellales</taxon>
        <taxon>Moraxellaceae</taxon>
        <taxon>Acinetobacter</taxon>
        <taxon>Acinetobacter calcoaceticus/baumannii complex</taxon>
    </lineage>
</organism>
<protein>
    <recommendedName>
        <fullName evidence="1">1-(5-phosphoribosyl)-5-[(5-phosphoribosylamino)methylideneamino] imidazole-4-carboxamide isomerase</fullName>
        <ecNumber evidence="1">5.3.1.16</ecNumber>
    </recommendedName>
    <alternativeName>
        <fullName evidence="1">Phosphoribosylformimino-5-aminoimidazole carboxamide ribotide isomerase</fullName>
    </alternativeName>
</protein>
<proteinExistence type="inferred from homology"/>
<comment type="catalytic activity">
    <reaction evidence="1">
        <text>1-(5-phospho-beta-D-ribosyl)-5-[(5-phospho-beta-D-ribosylamino)methylideneamino]imidazole-4-carboxamide = 5-[(5-phospho-1-deoxy-D-ribulos-1-ylimino)methylamino]-1-(5-phospho-beta-D-ribosyl)imidazole-4-carboxamide</text>
        <dbReference type="Rhea" id="RHEA:15469"/>
        <dbReference type="ChEBI" id="CHEBI:58435"/>
        <dbReference type="ChEBI" id="CHEBI:58525"/>
        <dbReference type="EC" id="5.3.1.16"/>
    </reaction>
</comment>
<comment type="pathway">
    <text evidence="1">Amino-acid biosynthesis; L-histidine biosynthesis; L-histidine from 5-phospho-alpha-D-ribose 1-diphosphate: step 4/9.</text>
</comment>
<comment type="subcellular location">
    <subcellularLocation>
        <location evidence="1">Cytoplasm</location>
    </subcellularLocation>
</comment>
<comment type="similarity">
    <text evidence="1">Belongs to the HisA/HisF family.</text>
</comment>
<dbReference type="EC" id="5.3.1.16" evidence="1"/>
<dbReference type="EMBL" id="CU468230">
    <property type="protein sequence ID" value="CAO99635.1"/>
    <property type="molecule type" value="Genomic_DNA"/>
</dbReference>
<dbReference type="SMR" id="B0VPB7"/>
<dbReference type="KEGG" id="abm:ABSDF0237"/>
<dbReference type="HOGENOM" id="CLU_048577_1_1_6"/>
<dbReference type="UniPathway" id="UPA00031">
    <property type="reaction ID" value="UER00009"/>
</dbReference>
<dbReference type="Proteomes" id="UP000001741">
    <property type="component" value="Chromosome"/>
</dbReference>
<dbReference type="GO" id="GO:0005737">
    <property type="term" value="C:cytoplasm"/>
    <property type="evidence" value="ECO:0007669"/>
    <property type="project" value="UniProtKB-SubCell"/>
</dbReference>
<dbReference type="GO" id="GO:0003949">
    <property type="term" value="F:1-(5-phosphoribosyl)-5-[(5-phosphoribosylamino)methylideneamino]imidazole-4-carboxamide isomerase activity"/>
    <property type="evidence" value="ECO:0007669"/>
    <property type="project" value="UniProtKB-UniRule"/>
</dbReference>
<dbReference type="GO" id="GO:0000105">
    <property type="term" value="P:L-histidine biosynthetic process"/>
    <property type="evidence" value="ECO:0007669"/>
    <property type="project" value="UniProtKB-UniRule"/>
</dbReference>
<dbReference type="GO" id="GO:0000162">
    <property type="term" value="P:L-tryptophan biosynthetic process"/>
    <property type="evidence" value="ECO:0007669"/>
    <property type="project" value="TreeGrafter"/>
</dbReference>
<dbReference type="CDD" id="cd04732">
    <property type="entry name" value="HisA"/>
    <property type="match status" value="1"/>
</dbReference>
<dbReference type="FunFam" id="3.20.20.70:FF:000009">
    <property type="entry name" value="1-(5-phosphoribosyl)-5-[(5-phosphoribosylamino)methylideneamino] imidazole-4-carboxamide isomerase"/>
    <property type="match status" value="1"/>
</dbReference>
<dbReference type="Gene3D" id="3.20.20.70">
    <property type="entry name" value="Aldolase class I"/>
    <property type="match status" value="1"/>
</dbReference>
<dbReference type="HAMAP" id="MF_01014">
    <property type="entry name" value="HisA"/>
    <property type="match status" value="1"/>
</dbReference>
<dbReference type="InterPro" id="IPR013785">
    <property type="entry name" value="Aldolase_TIM"/>
</dbReference>
<dbReference type="InterPro" id="IPR006062">
    <property type="entry name" value="His_biosynth"/>
</dbReference>
<dbReference type="InterPro" id="IPR006063">
    <property type="entry name" value="HisA_bact_arch"/>
</dbReference>
<dbReference type="InterPro" id="IPR044524">
    <property type="entry name" value="Isoase_HisA-like"/>
</dbReference>
<dbReference type="InterPro" id="IPR023016">
    <property type="entry name" value="Isoase_HisA-like_bact"/>
</dbReference>
<dbReference type="InterPro" id="IPR011060">
    <property type="entry name" value="RibuloseP-bd_barrel"/>
</dbReference>
<dbReference type="NCBIfam" id="TIGR00007">
    <property type="entry name" value="1-(5-phosphoribosyl)-5-[(5-phosphoribosylamino)methylideneamino]imidazole-4-carboxamide isomerase"/>
    <property type="match status" value="1"/>
</dbReference>
<dbReference type="PANTHER" id="PTHR43090">
    <property type="entry name" value="1-(5-PHOSPHORIBOSYL)-5-[(5-PHOSPHORIBOSYLAMINO)METHYLIDENEAMINO] IMIDAZOLE-4-CARBOXAMIDE ISOMERASE"/>
    <property type="match status" value="1"/>
</dbReference>
<dbReference type="PANTHER" id="PTHR43090:SF2">
    <property type="entry name" value="1-(5-PHOSPHORIBOSYL)-5-[(5-PHOSPHORIBOSYLAMINO)METHYLIDENEAMINO] IMIDAZOLE-4-CARBOXAMIDE ISOMERASE"/>
    <property type="match status" value="1"/>
</dbReference>
<dbReference type="Pfam" id="PF00977">
    <property type="entry name" value="His_biosynth"/>
    <property type="match status" value="1"/>
</dbReference>
<dbReference type="SUPFAM" id="SSF51366">
    <property type="entry name" value="Ribulose-phoshate binding barrel"/>
    <property type="match status" value="1"/>
</dbReference>
<accession>B0VPB7</accession>
<evidence type="ECO:0000255" key="1">
    <source>
        <dbReference type="HAMAP-Rule" id="MF_01014"/>
    </source>
</evidence>
<reference key="1">
    <citation type="journal article" date="2008" name="PLoS ONE">
        <title>Comparative analysis of Acinetobacters: three genomes for three lifestyles.</title>
        <authorList>
            <person name="Vallenet D."/>
            <person name="Nordmann P."/>
            <person name="Barbe V."/>
            <person name="Poirel L."/>
            <person name="Mangenot S."/>
            <person name="Bataille E."/>
            <person name="Dossat C."/>
            <person name="Gas S."/>
            <person name="Kreimeyer A."/>
            <person name="Lenoble P."/>
            <person name="Oztas S."/>
            <person name="Poulain J."/>
            <person name="Segurens B."/>
            <person name="Robert C."/>
            <person name="Abergel C."/>
            <person name="Claverie J.-M."/>
            <person name="Raoult D."/>
            <person name="Medigue C."/>
            <person name="Weissenbach J."/>
            <person name="Cruveiller S."/>
        </authorList>
    </citation>
    <scope>NUCLEOTIDE SEQUENCE [LARGE SCALE GENOMIC DNA]</scope>
    <source>
        <strain>SDF</strain>
    </source>
</reference>
<keyword id="KW-0028">Amino-acid biosynthesis</keyword>
<keyword id="KW-0963">Cytoplasm</keyword>
<keyword id="KW-0368">Histidine biosynthesis</keyword>
<keyword id="KW-0413">Isomerase</keyword>
<sequence length="243" mass="26046">MLIIPAIDLKDGKCVRLKQGRMEDDTVFSDDLVATAQHWVNEGARRLHLVDLNGAFAGTPIHKPVVEAIAKAQPELPIQIGGGIRSLETIEHYLEAGVTFVIIGTKAVQEPEFVEEACKSFAGHIIVGIDAMNGMVATDGWANVTDVKATDLAKRFADAGVSSIVYTDIARDGMMQGVNVEQTVNLAQYSGLPVIASGGVTNLDDVRNLKGQLGILGAITGRAIYEGTLNLREAQLLLDENRL</sequence>
<name>HIS4_ACIBS</name>
<feature type="chain" id="PRO_1000135068" description="1-(5-phosphoribosyl)-5-[(5-phosphoribosylamino)methylideneamino] imidazole-4-carboxamide isomerase">
    <location>
        <begin position="1"/>
        <end position="243"/>
    </location>
</feature>
<feature type="active site" description="Proton acceptor" evidence="1">
    <location>
        <position position="8"/>
    </location>
</feature>
<feature type="active site" description="Proton donor" evidence="1">
    <location>
        <position position="130"/>
    </location>
</feature>
<gene>
    <name evidence="1" type="primary">hisA</name>
    <name type="ordered locus">ABSDF0237</name>
</gene>